<reference key="1">
    <citation type="journal article" date="1988" name="J. Virol.">
        <title>Analysis of the primary structure of the long terminal repeat and the gag and pol genes of the human spumaretrovirus.</title>
        <authorList>
            <person name="Maurer B."/>
            <person name="Bannert H."/>
            <person name="Darai G."/>
            <person name="Fluegel R.M."/>
        </authorList>
    </citation>
    <scope>NUCLEOTIDE SEQUENCE [GENOMIC RNA]</scope>
</reference>
<reference key="2">
    <citation type="submission" date="1995-02" db="EMBL/GenBank/DDBJ databases">
        <authorList>
            <person name="Fluegel R.M."/>
        </authorList>
    </citation>
    <scope>NUCLEOTIDE SEQUENCE [GENOMIC RNA]</scope>
    <scope>SEQUENCE REVISION</scope>
</reference>
<reference key="3">
    <citation type="journal article" date="1996" name="J. Virol.">
        <title>The carboxyl terminus of the human foamy virus Gag protein contains separable nucleic acid binding and nuclear transport domains.</title>
        <authorList>
            <person name="Yu S.F."/>
            <person name="Edelmann K."/>
            <person name="Strong R.K."/>
            <person name="Moebes A."/>
            <person name="Rethwilm A."/>
            <person name="Linial M.L."/>
        </authorList>
    </citation>
    <scope>NUCLEAR LOCALIZATION SIGNAL</scope>
    <scope>NUCLEIC ACID-BINDING</scope>
</reference>
<reference key="4">
    <citation type="journal article" date="1997" name="J. Virol.">
        <title>Nuclear targeting of incoming human foamy virus Gag proteins involves a centriolar step.</title>
        <authorList>
            <person name="Saib A."/>
            <person name="Puvion-Dutilleul F."/>
            <person name="Schmid M."/>
            <person name="Peries J."/>
            <person name="de The H."/>
        </authorList>
    </citation>
    <scope>SUBCELLULAR LOCATION</scope>
</reference>
<reference key="5">
    <citation type="journal article" date="1999" name="J. Virol.">
        <title>Molecular characterization of proteolytic processing of the Gag proteins of human spumavirus.</title>
        <authorList>
            <person name="Pfrepper K.-I."/>
            <person name="Loechelt M."/>
            <person name="Rackwitz H.R."/>
            <person name="Schnoelzer M."/>
            <person name="Heid H."/>
            <person name="Fluegel R.M."/>
        </authorList>
    </citation>
    <scope>PROTEOLYTIC PROCESSING OF POLYPROTEIN</scope>
</reference>
<reference key="6">
    <citation type="journal article" date="2004" name="J. Virol.">
        <title>Role of the C terminus of foamy virus Gag in RNA packaging and Pol expression.</title>
        <authorList>
            <person name="Stenbak C.R."/>
            <person name="Linial M.L."/>
        </authorList>
    </citation>
    <scope>CHARACTERIZATION OF GAG PROTEIN</scope>
</reference>
<reference key="7">
    <citation type="journal article" date="2005" name="J. Virol.">
        <title>Identification of domains in gag important for prototypic foamy virus egress.</title>
        <authorList>
            <person name="Patton G.S."/>
            <person name="Morris S.A."/>
            <person name="Chung W."/>
            <person name="Bieniasz P.D."/>
            <person name="McClure M.O."/>
        </authorList>
    </citation>
    <scope>LATE-BUDDING MOTIFS</scope>
    <scope>INTERACTION WITH HUMAN TSG101</scope>
</reference>
<reference key="8">
    <citation type="journal article" date="2005" name="J. Virol.">
        <title>N-terminal Gag domain required for foamy virus particle assembly and export.</title>
        <authorList>
            <person name="Cartellieri M."/>
            <person name="Herchenroeder O."/>
            <person name="Rudolph W."/>
            <person name="Heinkelein M."/>
            <person name="Lindemann D."/>
            <person name="Zentgraf H."/>
            <person name="Rethwilm A."/>
        </authorList>
    </citation>
    <scope>FUNCTION OF N-TERMINUS</scope>
    <scope>MUTAGENESIS OF LEU-17; TRP-44; TRP-45; ARG-50; LEU-56; LEU-58 AND PRO-65</scope>
</reference>
<reference key="9">
    <citation type="journal article" date="2003" name="J. Cell Sci.">
        <title>Targeting of incoming retroviral Gag to the centrosome involves a direct interaction with the dynein light chain 8.</title>
        <authorList>
            <person name="Petit C."/>
            <person name="Giron M.L."/>
            <person name="Tobaly-Tapiero J."/>
            <person name="Bittoun P."/>
            <person name="Real E."/>
            <person name="Jacob Y."/>
            <person name="Tordo N."/>
            <person name="De The H."/>
            <person name="Saib A."/>
        </authorList>
    </citation>
    <scope>FUNCTION</scope>
    <scope>INTERACTION OF GAG PROTEIN WITH HOST DYNLL1</scope>
    <scope>MUTAGENESIS OF LEU-171</scope>
</reference>
<reference key="10">
    <citation type="journal article" date="2003" name="Curr. Top. Microbiol. Immunol.">
        <title>Proteolytic processing of foamy virus Gag and Pol proteins.</title>
        <authorList>
            <person name="Fluegel R.M."/>
            <person name="Pfrepper K.-I."/>
        </authorList>
    </citation>
    <scope>REVIEW</scope>
</reference>
<reference key="11">
    <citation type="journal article" date="2004" name="Curr. Opin. Microbiol.">
        <title>Foamy viruses-a world apart.</title>
        <authorList>
            <person name="Delelis O."/>
            <person name="Lehmann-Che J."/>
            <person name="Saib A."/>
        </authorList>
    </citation>
    <scope>REVIEW</scope>
</reference>
<accession>P14349</accession>
<accession>P89871</accession>
<keyword id="KW-0002">3D-structure</keyword>
<keyword id="KW-0167">Capsid protein</keyword>
<keyword id="KW-1176">Cytoplasmic inwards viral transport</keyword>
<keyword id="KW-0238">DNA-binding</keyword>
<keyword id="KW-1035">Host cytoplasm</keyword>
<keyword id="KW-1048">Host nucleus</keyword>
<keyword id="KW-0945">Host-virus interaction</keyword>
<keyword id="KW-1177">Microtubular inwards viral transport</keyword>
<keyword id="KW-1185">Reference proteome</keyword>
<keyword id="KW-0694">RNA-binding</keyword>
<keyword id="KW-1198">Viral budding</keyword>
<keyword id="KW-1187">Viral budding via the host ESCRT complexes</keyword>
<keyword id="KW-0543">Viral nucleoprotein</keyword>
<keyword id="KW-1188">Viral release from host cell</keyword>
<keyword id="KW-0946">Virion</keyword>
<keyword id="KW-1160">Virus entry into host cell</keyword>
<name>GAG_FOAMV</name>
<gene>
    <name type="primary">gag</name>
</gene>
<evidence type="ECO:0000250" key="1"/>
<evidence type="ECO:0000255" key="2"/>
<evidence type="ECO:0000256" key="3">
    <source>
        <dbReference type="SAM" id="MobiDB-lite"/>
    </source>
</evidence>
<evidence type="ECO:0000269" key="4">
    <source>
    </source>
</evidence>
<evidence type="ECO:0000269" key="5">
    <source>
    </source>
</evidence>
<evidence type="ECO:0000269" key="6">
    <source>
    </source>
</evidence>
<evidence type="ECO:0000269" key="7">
    <source>
    </source>
</evidence>
<evidence type="ECO:0000269" key="8">
    <source>
    </source>
</evidence>
<evidence type="ECO:0007829" key="9">
    <source>
        <dbReference type="PDB" id="4JMR"/>
    </source>
</evidence>
<evidence type="ECO:0007829" key="10">
    <source>
        <dbReference type="PDB" id="4JNH"/>
    </source>
</evidence>
<evidence type="ECO:0007829" key="11">
    <source>
        <dbReference type="PDB" id="5M1G"/>
    </source>
</evidence>
<evidence type="ECO:0007829" key="12">
    <source>
        <dbReference type="PDB" id="5M1H"/>
    </source>
</evidence>
<organism>
    <name type="scientific">Human spumaretrovirus</name>
    <name type="common">SFVcpz(hu)</name>
    <name type="synonym">Human foamy virus</name>
    <dbReference type="NCBI Taxonomy" id="11963"/>
    <lineage>
        <taxon>Viruses</taxon>
        <taxon>Riboviria</taxon>
        <taxon>Pararnavirae</taxon>
        <taxon>Artverviricota</taxon>
        <taxon>Revtraviricetes</taxon>
        <taxon>Ortervirales</taxon>
        <taxon>Retroviridae</taxon>
        <taxon>Spumaretrovirinae</taxon>
        <taxon>Spumavirus</taxon>
        <taxon>Simian foamy virus</taxon>
    </lineage>
</organism>
<proteinExistence type="evidence at protein level"/>
<feature type="chain" id="PRO_0000125475" description="Gag polyprotein">
    <location>
        <begin position="1"/>
        <end position="648"/>
    </location>
</feature>
<feature type="chain" id="PRO_0000245437" description="Gag protein">
    <location>
        <begin position="1"/>
        <end position="621"/>
    </location>
</feature>
<feature type="chain" id="PRO_0000245438" description="p3">
    <location>
        <begin position="622"/>
        <end position="648"/>
    </location>
</feature>
<feature type="region of interest" description="Involved in viral assembly and export" evidence="2">
    <location>
        <begin position="37"/>
        <end position="60"/>
    </location>
</feature>
<feature type="region of interest" description="Disordered" evidence="3">
    <location>
        <begin position="175"/>
        <end position="275"/>
    </location>
</feature>
<feature type="region of interest" description="Disordered" evidence="3">
    <location>
        <begin position="476"/>
        <end position="648"/>
    </location>
</feature>
<feature type="region of interest" description="Nucleic acid-binding; GR-box 1">
    <location>
        <begin position="485"/>
        <end position="510"/>
    </location>
</feature>
<feature type="region of interest" description="GR-box 2">
    <location>
        <begin position="535"/>
        <end position="556"/>
    </location>
</feature>
<feature type="region of interest" description="GR-box 3">
    <location>
        <begin position="586"/>
        <end position="618"/>
    </location>
</feature>
<feature type="short sequence motif" description="PTAP/PSAP motif">
    <location>
        <begin position="284"/>
        <end position="287"/>
    </location>
</feature>
<feature type="short sequence motif" description="Nuclear localization signal" evidence="8">
    <location>
        <begin position="535"/>
        <end position="556"/>
    </location>
</feature>
<feature type="compositionally biased region" description="Low complexity" evidence="3">
    <location>
        <begin position="230"/>
        <end position="249"/>
    </location>
</feature>
<feature type="compositionally biased region" description="Basic and acidic residues" evidence="3">
    <location>
        <begin position="262"/>
        <end position="275"/>
    </location>
</feature>
<feature type="compositionally biased region" description="Polar residues" evidence="3">
    <location>
        <begin position="495"/>
        <end position="504"/>
    </location>
</feature>
<feature type="compositionally biased region" description="Polar residues" evidence="3">
    <location>
        <begin position="514"/>
        <end position="524"/>
    </location>
</feature>
<feature type="compositionally biased region" description="Low complexity" evidence="3">
    <location>
        <begin position="525"/>
        <end position="534"/>
    </location>
</feature>
<feature type="compositionally biased region" description="Polar residues" evidence="3">
    <location>
        <begin position="559"/>
        <end position="592"/>
    </location>
</feature>
<feature type="compositionally biased region" description="Low complexity" evidence="3">
    <location>
        <begin position="624"/>
        <end position="642"/>
    </location>
</feature>
<feature type="site" description="Cleavage; by viral protease; low efficiency" evidence="2">
    <location>
        <begin position="311"/>
        <end position="312"/>
    </location>
</feature>
<feature type="site" description="Cleavage; by viral protease; low efficiency" evidence="2">
    <location>
        <begin position="339"/>
        <end position="340"/>
    </location>
</feature>
<feature type="site" description="Cleavage; by viral protease; low efficiency" evidence="2">
    <location>
        <begin position="352"/>
        <end position="353"/>
    </location>
</feature>
<feature type="site" description="Cleavage; by viral protease; partial">
    <location>
        <begin position="621"/>
        <end position="622"/>
    </location>
</feature>
<feature type="mutagenesis site" description="No effect on capsid export. Reduced virus titer." evidence="7">
    <original>L</original>
    <variation>A</variation>
    <location>
        <position position="17"/>
    </location>
</feature>
<feature type="mutagenesis site" description="Complete loss of capsid egress from transfected cells." evidence="7">
    <original>L</original>
    <variation>S</variation>
    <location>
        <position position="17"/>
    </location>
</feature>
<feature type="mutagenesis site" description="75% loss of particle export. Reduced virus titer." evidence="7">
    <original>W</original>
    <variation>A</variation>
    <location>
        <position position="44"/>
    </location>
</feature>
<feature type="mutagenesis site" description="Complete loss of capsid egress from transfected cells." evidence="7">
    <original>W</original>
    <variation>A</variation>
    <location>
        <position position="45"/>
    </location>
</feature>
<feature type="mutagenesis site" description="Complete loss of capsid egress from transfected cells." evidence="7">
    <original>R</original>
    <variation>A</variation>
    <location>
        <position position="50"/>
    </location>
</feature>
<feature type="mutagenesis site" description="Complete loss of capsid egress from transfected cells." evidence="7">
    <original>L</original>
    <variation>A</variation>
    <location>
        <position position="56"/>
    </location>
</feature>
<feature type="mutagenesis site" description="Complete loss of capsid egress from transfected cells." evidence="7">
    <original>L</original>
    <variation>A</variation>
    <location>
        <position position="58"/>
    </location>
</feature>
<feature type="mutagenesis site" description="75% loss of particle export." evidence="7">
    <original>P</original>
    <variation>A</variation>
    <location>
        <position position="65"/>
    </location>
</feature>
<feature type="mutagenesis site" description="Drastically reduces infectivity." evidence="5">
    <original>L</original>
    <variation>G</variation>
    <location>
        <position position="171"/>
    </location>
</feature>
<feature type="strand" evidence="10">
    <location>
        <begin position="10"/>
        <end position="12"/>
    </location>
</feature>
<feature type="helix" evidence="10">
    <location>
        <begin position="14"/>
        <end position="23"/>
    </location>
</feature>
<feature type="strand" evidence="10">
    <location>
        <begin position="35"/>
        <end position="41"/>
    </location>
</feature>
<feature type="strand" evidence="10">
    <location>
        <begin position="46"/>
        <end position="48"/>
    </location>
</feature>
<feature type="strand" evidence="10">
    <location>
        <begin position="50"/>
        <end position="59"/>
    </location>
</feature>
<feature type="strand" evidence="10">
    <location>
        <begin position="65"/>
        <end position="73"/>
    </location>
</feature>
<feature type="turn" evidence="9">
    <location>
        <begin position="80"/>
        <end position="82"/>
    </location>
</feature>
<feature type="strand" evidence="10">
    <location>
        <begin position="83"/>
        <end position="88"/>
    </location>
</feature>
<feature type="helix" evidence="10">
    <location>
        <begin position="90"/>
        <end position="93"/>
    </location>
</feature>
<feature type="turn" evidence="10">
    <location>
        <begin position="94"/>
        <end position="96"/>
    </location>
</feature>
<feature type="helix" evidence="10">
    <location>
        <begin position="105"/>
        <end position="112"/>
    </location>
</feature>
<feature type="helix" evidence="10">
    <location>
        <begin position="122"/>
        <end position="126"/>
    </location>
</feature>
<feature type="helix" evidence="10">
    <location>
        <begin position="132"/>
        <end position="135"/>
    </location>
</feature>
<feature type="helix" evidence="10">
    <location>
        <begin position="140"/>
        <end position="177"/>
    </location>
</feature>
<feature type="helix" evidence="12">
    <location>
        <begin position="308"/>
        <end position="314"/>
    </location>
</feature>
<feature type="turn" evidence="12">
    <location>
        <begin position="321"/>
        <end position="323"/>
    </location>
</feature>
<feature type="helix" evidence="12">
    <location>
        <begin position="324"/>
        <end position="338"/>
    </location>
</feature>
<feature type="helix" evidence="12">
    <location>
        <begin position="344"/>
        <end position="355"/>
    </location>
</feature>
<feature type="turn" evidence="12">
    <location>
        <begin position="365"/>
        <end position="367"/>
    </location>
</feature>
<feature type="helix" evidence="12">
    <location>
        <begin position="371"/>
        <end position="382"/>
    </location>
</feature>
<feature type="strand" evidence="11">
    <location>
        <begin position="384"/>
        <end position="386"/>
    </location>
</feature>
<feature type="strand" evidence="12">
    <location>
        <begin position="387"/>
        <end position="389"/>
    </location>
</feature>
<feature type="helix" evidence="11">
    <location>
        <begin position="393"/>
        <end position="401"/>
    </location>
</feature>
<feature type="helix" evidence="11">
    <location>
        <begin position="404"/>
        <end position="415"/>
    </location>
</feature>
<feature type="helix" evidence="11">
    <location>
        <begin position="419"/>
        <end position="426"/>
    </location>
</feature>
<feature type="turn" evidence="11">
    <location>
        <begin position="427"/>
        <end position="429"/>
    </location>
</feature>
<feature type="strand" evidence="11">
    <location>
        <begin position="430"/>
        <end position="432"/>
    </location>
</feature>
<feature type="helix" evidence="11">
    <location>
        <begin position="433"/>
        <end position="445"/>
    </location>
</feature>
<feature type="strand" evidence="12">
    <location>
        <begin position="446"/>
        <end position="448"/>
    </location>
</feature>
<feature type="helix" evidence="11">
    <location>
        <begin position="450"/>
        <end position="454"/>
    </location>
</feature>
<feature type="helix" evidence="11">
    <location>
        <begin position="456"/>
        <end position="467"/>
    </location>
</feature>
<feature type="strand" evidence="12">
    <location>
        <begin position="470"/>
        <end position="473"/>
    </location>
</feature>
<feature type="strand" evidence="11">
    <location>
        <begin position="475"/>
        <end position="477"/>
    </location>
</feature>
<protein>
    <recommendedName>
        <fullName>Gag polyprotein</fullName>
    </recommendedName>
    <alternativeName>
        <fullName>Pr71Gag</fullName>
    </alternativeName>
    <component>
        <recommendedName>
            <fullName>Gag protein</fullName>
        </recommendedName>
        <alternativeName>
            <fullName>p68Gag</fullName>
        </alternativeName>
    </component>
    <component>
        <recommendedName>
            <fullName>p3</fullName>
        </recommendedName>
        <alternativeName>
            <fullName>p3Gag</fullName>
        </alternativeName>
    </component>
</protein>
<comment type="function">
    <text evidence="5 7">Involved in capsid formation and genome binding. Shortly after infection, interaction between incoming particle-associated Gag proteins and host dynein allows centrosomal targeting of the viral genome (associated to Gag), prior to nucleus translocation and integration into host genome.</text>
</comment>
<comment type="subunit">
    <molecule>Gag protein</molecule>
    <text evidence="1 5 6">Specifically interacts with the N-terminus of leader peptide (By similarity). This specific interaction between Gag protein and Env glycoprotein may compensate for the lack of a Gag membrane targeting signal, and allow particle egress. The capsid is composed of multimeric Gag protein. Interacts with human TSG101. Interacts with host light chain cytoplasmic dynein DYNLL1; this interaction is critical for intracellular microtubule-dependent viral genome transport toward the centrosome.</text>
</comment>
<comment type="subcellular location">
    <molecule>Gag protein</molecule>
    <subcellularLocation>
        <location>Virion</location>
    </subcellularLocation>
    <subcellularLocation>
        <location>Host nucleus</location>
    </subcellularLocation>
    <subcellularLocation>
        <location>Host cytoplasm</location>
    </subcellularLocation>
    <text>Nuclear at initial phase, cytoplasmic at assembly. Shortly after infection, Gag protein is targeted to centrosomes. It is then actively transported into the nucleus thanks to its nuclear localization signal. In the late phases of infection, Gag proteins assemble in the cytoplasm to form the virion's capsids.</text>
</comment>
<comment type="subcellular location">
    <molecule>p3</molecule>
    <subcellularLocation>
        <location>Virion</location>
    </subcellularLocation>
</comment>
<comment type="domain">
    <text>Gag protein contains 3 glycine-arginine motifs (GR-boxes) necessary for RNA packaging, the first of which has nucleic acid binding properties in vitro.</text>
</comment>
<comment type="domain">
    <text>Late-budding 'domains' (L domains) are short sequence motifs essential for viral particle budding. They recruit proteins of the host ESCRT machinery (Endosomal Sorting Complex Required for Transport) or ESCRT-associated proteins. Nucleocapsid protein p14 contains one L domain: a PTAP/PSAP motif, which interacts with the UEV domain of TSG101.</text>
</comment>
<comment type="PTM">
    <text evidence="4">Specific enzymatic cleavages in vivo by viral protease yield mature proteins. The protease is not cleaved off from Pol. Since cleavage efficiency is not optimal for all sites, intermediary molecules are expressed.</text>
</comment>
<comment type="miscellaneous">
    <text>Foamy viruses are distinct from other retroviruses in many respects. Their protease is active as an uncleaved Pro-Pol protein. Mature particles do not include the usual processed retroviral structural protein (MA, CA and NC), but instead contain two large Gag proteins. Their functional nucleic acid appears to be either RNA or dsDNA (up to 20% of extracellular particles), because they probably proceed either to an early (before integration) or late reverse transcription (after assembly). Foamy viruses have the ability to retrotranspose intracellularly with high efficiency. They bud predominantly into the endoplasmic reticulum (ER) and occasionally at the plasma membrane. Budding requires the presence of Env proteins. Most viral particles probably remain within the infected cell.</text>
</comment>
<dbReference type="EMBL" id="M19427">
    <property type="protein sequence ID" value="AAA66555.1"/>
    <property type="status" value="ALT_TERM"/>
    <property type="molecule type" value="Genomic_RNA"/>
</dbReference>
<dbReference type="EMBL" id="U21247">
    <property type="protein sequence ID" value="AAB48111.1"/>
    <property type="molecule type" value="Genomic_RNA"/>
</dbReference>
<dbReference type="PDB" id="4JMR">
    <property type="method" value="X-ray"/>
    <property type="resolution" value="2.90 A"/>
    <property type="chains" value="A/B/C/D=1-179"/>
</dbReference>
<dbReference type="PDB" id="4JNH">
    <property type="method" value="X-ray"/>
    <property type="resolution" value="2.40 A"/>
    <property type="chains" value="A/B=1-179"/>
</dbReference>
<dbReference type="PDB" id="5M1G">
    <property type="method" value="NMR"/>
    <property type="chains" value="A/B=381-477"/>
</dbReference>
<dbReference type="PDB" id="5M1H">
    <property type="method" value="NMR"/>
    <property type="chains" value="A=300-477"/>
</dbReference>
<dbReference type="PDB" id="5MLU">
    <property type="method" value="X-ray"/>
    <property type="resolution" value="2.80 A"/>
    <property type="chains" value="M=535-551"/>
</dbReference>
<dbReference type="PDB" id="8Q36">
    <property type="method" value="X-ray"/>
    <property type="resolution" value="2.60 A"/>
    <property type="chains" value="MMM=535-552"/>
</dbReference>
<dbReference type="PDB" id="8Q3E">
    <property type="method" value="X-ray"/>
    <property type="resolution" value="2.17 A"/>
    <property type="chains" value="MMM=535-552"/>
</dbReference>
<dbReference type="PDBsum" id="4JMR"/>
<dbReference type="PDBsum" id="4JNH"/>
<dbReference type="PDBsum" id="5M1G"/>
<dbReference type="PDBsum" id="5M1H"/>
<dbReference type="PDBsum" id="5MLU"/>
<dbReference type="PDBsum" id="8Q36"/>
<dbReference type="PDBsum" id="8Q3E"/>
<dbReference type="SMR" id="P14349"/>
<dbReference type="ELM" id="P14349"/>
<dbReference type="MEROPS" id="A09.001"/>
<dbReference type="BRENDA" id="3.4.23.B11">
    <property type="organism ID" value="2705"/>
</dbReference>
<dbReference type="EvolutionaryTrace" id="P14349"/>
<dbReference type="Proteomes" id="UP000138352">
    <property type="component" value="Genome"/>
</dbReference>
<dbReference type="GO" id="GO:0043657">
    <property type="term" value="C:host cell"/>
    <property type="evidence" value="ECO:0007669"/>
    <property type="project" value="GOC"/>
</dbReference>
<dbReference type="GO" id="GO:0030430">
    <property type="term" value="C:host cell cytoplasm"/>
    <property type="evidence" value="ECO:0007669"/>
    <property type="project" value="UniProtKB-SubCell"/>
</dbReference>
<dbReference type="GO" id="GO:0042025">
    <property type="term" value="C:host cell nucleus"/>
    <property type="evidence" value="ECO:0007669"/>
    <property type="project" value="UniProtKB-SubCell"/>
</dbReference>
<dbReference type="GO" id="GO:0044163">
    <property type="term" value="C:host cytoskeleton"/>
    <property type="evidence" value="ECO:0000315"/>
    <property type="project" value="CACAO"/>
</dbReference>
<dbReference type="GO" id="GO:0019013">
    <property type="term" value="C:viral nucleocapsid"/>
    <property type="evidence" value="ECO:0007669"/>
    <property type="project" value="UniProtKB-KW"/>
</dbReference>
<dbReference type="GO" id="GO:0003677">
    <property type="term" value="F:DNA binding"/>
    <property type="evidence" value="ECO:0007669"/>
    <property type="project" value="UniProtKB-KW"/>
</dbReference>
<dbReference type="GO" id="GO:0003723">
    <property type="term" value="F:RNA binding"/>
    <property type="evidence" value="ECO:0007669"/>
    <property type="project" value="UniProtKB-KW"/>
</dbReference>
<dbReference type="GO" id="GO:0075521">
    <property type="term" value="P:microtubule-dependent intracellular transport of viral material towards nucleus"/>
    <property type="evidence" value="ECO:0007669"/>
    <property type="project" value="UniProtKB-KW"/>
</dbReference>
<dbReference type="GO" id="GO:0046718">
    <property type="term" value="P:symbiont entry into host cell"/>
    <property type="evidence" value="ECO:0007669"/>
    <property type="project" value="UniProtKB-KW"/>
</dbReference>
<dbReference type="GO" id="GO:0039702">
    <property type="term" value="P:viral budding via host ESCRT complex"/>
    <property type="evidence" value="ECO:0007669"/>
    <property type="project" value="UniProtKB-KW"/>
</dbReference>
<dbReference type="GO" id="GO:0019076">
    <property type="term" value="P:viral release from host cell"/>
    <property type="evidence" value="ECO:0007669"/>
    <property type="project" value="InterPro"/>
</dbReference>
<dbReference type="Gene3D" id="1.20.5.1500">
    <property type="match status" value="1"/>
</dbReference>
<dbReference type="InterPro" id="IPR049099">
    <property type="entry name" value="Gag_C"/>
</dbReference>
<dbReference type="InterPro" id="IPR004957">
    <property type="entry name" value="Gag_N"/>
</dbReference>
<dbReference type="Pfam" id="PF20672">
    <property type="entry name" value="Gag_FV_central"/>
    <property type="match status" value="1"/>
</dbReference>
<dbReference type="Pfam" id="PF20673">
    <property type="entry name" value="Gag_spuma_C"/>
    <property type="match status" value="1"/>
</dbReference>
<dbReference type="Pfam" id="PF03276">
    <property type="entry name" value="Gag_spuma_N"/>
    <property type="match status" value="1"/>
</dbReference>
<sequence>MASGSNVEEYELDVEALVVILRDRNIPRNPLHGEVIGLRLTEGWWGQIERFQMVRLILQDDDNEPLQRPRYEVIQRAVNPHTMFMISGPLAELQLAFQDLDLPEGPLRFGPLANGHYVQGDPYSSSYRPVTMAETAQMTRDELEDVLNTQSEIEIQMINLLELYEVETRALRRQLAERSSTGQGGISPGAPRSRPPVSSFSGLPSLPSIPGIHPRAPSPPRATSTPGNIPWSLGDDSPPSSSFPGPSQPRVSFHPGNPFVEEEGHRPRSQSRERRREILPAPVPSAPPMIQYIPVPPPPPIGTVIPIQHIRSVTGEPPRNPREIPIWLGRNAPAIDGVFPVTTPDLRCRIINAILGGNIGLSLTPGDCLTWDSAVATLFIRTHGTFPMHQLGNVIKGIVDQEGVATAYTLGMMLSGQNYQLVSGIIRGYLPGQAVVTALQQRLDQEIDNQTRAETFIQHLNAVYEILGLNARGQSIRASVTPQPRPSRGRGRGQNTSRPSQGPANSGRGRQRPASGQSNRGSSTQNQNQDNLNQGGYNLRPRTYQPQRYGGGRGRRWNDNTNNQESRPSDQGSQTPRPNQAGSGVRGNQSQTPRPAAGRGGRGNHNRNQRSSGAGDSRAVNTVTQSATSSTDESSSAVTAASGGDQRD</sequence>
<organismHost>
    <name type="scientific">Homo sapiens</name>
    <name type="common">Human</name>
    <dbReference type="NCBI Taxonomy" id="9606"/>
</organismHost>